<organism>
    <name type="scientific">Mycobacterium bovis (strain ATCC BAA-935 / AF2122/97)</name>
    <dbReference type="NCBI Taxonomy" id="233413"/>
    <lineage>
        <taxon>Bacteria</taxon>
        <taxon>Bacillati</taxon>
        <taxon>Actinomycetota</taxon>
        <taxon>Actinomycetes</taxon>
        <taxon>Mycobacteriales</taxon>
        <taxon>Mycobacteriaceae</taxon>
        <taxon>Mycobacterium</taxon>
        <taxon>Mycobacterium tuberculosis complex</taxon>
    </lineage>
</organism>
<comment type="function">
    <text evidence="1">Catalyzes the transfer of a methyl group from 5-methyltetrahydrofolate to homocysteine resulting in methionine formation.</text>
</comment>
<comment type="catalytic activity">
    <reaction evidence="1">
        <text>5-methyltetrahydropteroyltri-L-glutamate + L-homocysteine = tetrahydropteroyltri-L-glutamate + L-methionine</text>
        <dbReference type="Rhea" id="RHEA:21196"/>
        <dbReference type="ChEBI" id="CHEBI:57844"/>
        <dbReference type="ChEBI" id="CHEBI:58140"/>
        <dbReference type="ChEBI" id="CHEBI:58199"/>
        <dbReference type="ChEBI" id="CHEBI:58207"/>
        <dbReference type="EC" id="2.1.1.14"/>
    </reaction>
</comment>
<comment type="cofactor">
    <cofactor evidence="1">
        <name>Zn(2+)</name>
        <dbReference type="ChEBI" id="CHEBI:29105"/>
    </cofactor>
    <text evidence="1">Binds 1 zinc ion per subunit.</text>
</comment>
<comment type="pathway">
    <text evidence="1">Amino-acid biosynthesis; L-methionine biosynthesis via de novo pathway; L-methionine from L-homocysteine (MetE route): step 1/1.</text>
</comment>
<comment type="similarity">
    <text evidence="1 3">Belongs to the vitamin-B12 independent methionine synthase family.</text>
</comment>
<proteinExistence type="inferred from homology"/>
<reference key="1">
    <citation type="journal article" date="2003" name="Proc. Natl. Acad. Sci. U.S.A.">
        <title>The complete genome sequence of Mycobacterium bovis.</title>
        <authorList>
            <person name="Garnier T."/>
            <person name="Eiglmeier K."/>
            <person name="Camus J.-C."/>
            <person name="Medina N."/>
            <person name="Mansoor H."/>
            <person name="Pryor M."/>
            <person name="Duthoy S."/>
            <person name="Grondin S."/>
            <person name="Lacroix C."/>
            <person name="Monsempe C."/>
            <person name="Simon S."/>
            <person name="Harris B."/>
            <person name="Atkin R."/>
            <person name="Doggett J."/>
            <person name="Mayes R."/>
            <person name="Keating L."/>
            <person name="Wheeler P.R."/>
            <person name="Parkhill J."/>
            <person name="Barrell B.G."/>
            <person name="Cole S.T."/>
            <person name="Gordon S.V."/>
            <person name="Hewinson R.G."/>
        </authorList>
    </citation>
    <scope>NUCLEOTIDE SEQUENCE [LARGE SCALE GENOMIC DNA]</scope>
    <source>
        <strain>ATCC BAA-935 / AF2122/97</strain>
    </source>
</reference>
<reference key="2">
    <citation type="journal article" date="2017" name="Genome Announc.">
        <title>Updated reference genome sequence and annotation of Mycobacterium bovis AF2122/97.</title>
        <authorList>
            <person name="Malone K.M."/>
            <person name="Farrell D."/>
            <person name="Stuber T.P."/>
            <person name="Schubert O.T."/>
            <person name="Aebersold R."/>
            <person name="Robbe-Austerman S."/>
            <person name="Gordon S.V."/>
        </authorList>
    </citation>
    <scope>NUCLEOTIDE SEQUENCE [LARGE SCALE GENOMIC DNA]</scope>
    <scope>GENOME REANNOTATION</scope>
    <source>
        <strain>ATCC BAA-935 / AF2122/97</strain>
    </source>
</reference>
<sequence>MTQPVRRQPFTATITGSPRIGPRRELKRATEGYWAGRTSRSELEAVAATLRRDTWSALAAAGLDSVPVNTFSYYDQMLDTAVLLGALPPRVSPVSDGLDRYFAAARGTDQIAPLEMTKWFDTNYHYLVPEIGPSTTFTLHPGKVLAELKEALGQGIPARPVIIGPITFLLLSKAVDGAGAPIERLEELVPVYSELLSLLADGGAQWVQFDEPALVTDLSPDAPALAEAVYTALCSVSNRPAIYVATYFGDPGAALPALARTPVEAIGVDLVAGADTSVAGVPELAGKTLVAGVVDGRNVWRTDLEAALGTLATLLGSAATVAVSTSCSTLHVPYSLEPETDLDDALRSWLAFGAEKVREVVVLARALRDGHDAVADEIASSRAAIASRKRDPRLHNGQIRARIEAIVASGAHRGNAAQRRASQDARLHLPPLPTTTIGSYPQTSAIRVARAALRAGEIDEAEYVRRMRQEITEVIALQERLGLDVLVHGEPERNDMVQYFAEQLAGFFATQNGWVQSYGSRCVRPPILYGDVSRPRAMTVEWITYAQSLTDKPVKGMLTGPVTILAWSFVRDDQPLADTANQVALAIRDETVDLQSAGIAVIQVDEPALRELLPLRRADQAEYLRWAVGAFRLATSGVSDATQIHTHLCYSEFGEVIGAIADLDADVTSIEAARSHMEVLDDLNAIGFANGVGPGVYDIHSPRVPSAEEMADSLRAALRAVPAERLWVNPDCGLKTRNVDEVTASLHNMVAAAREVRAG</sequence>
<accession>P65341</accession>
<accession>A0A1R3XXH6</accession>
<accession>O06584</accession>
<accession>X2BHF0</accession>
<evidence type="ECO:0000255" key="1">
    <source>
        <dbReference type="HAMAP-Rule" id="MF_00172"/>
    </source>
</evidence>
<evidence type="ECO:0000256" key="2">
    <source>
        <dbReference type="SAM" id="MobiDB-lite"/>
    </source>
</evidence>
<evidence type="ECO:0000305" key="3"/>
<name>METE_MYCBO</name>
<keyword id="KW-0028">Amino-acid biosynthesis</keyword>
<keyword id="KW-0479">Metal-binding</keyword>
<keyword id="KW-0486">Methionine biosynthesis</keyword>
<keyword id="KW-0489">Methyltransferase</keyword>
<keyword id="KW-1185">Reference proteome</keyword>
<keyword id="KW-0677">Repeat</keyword>
<keyword id="KW-0808">Transferase</keyword>
<keyword id="KW-0862">Zinc</keyword>
<feature type="chain" id="PRO_0000098642" description="5-methyltetrahydropteroyltriglutamate--homocysteine methyltransferase">
    <location>
        <begin position="1"/>
        <end position="759"/>
    </location>
</feature>
<feature type="region of interest" description="Disordered" evidence="2">
    <location>
        <begin position="1"/>
        <end position="22"/>
    </location>
</feature>
<feature type="compositionally biased region" description="Polar residues" evidence="2">
    <location>
        <begin position="1"/>
        <end position="16"/>
    </location>
</feature>
<feature type="active site" description="Proton donor" evidence="1">
    <location>
        <position position="700"/>
    </location>
</feature>
<feature type="binding site" evidence="1">
    <location>
        <begin position="24"/>
        <end position="27"/>
    </location>
    <ligand>
        <name>5-methyltetrahydropteroyltri-L-glutamate</name>
        <dbReference type="ChEBI" id="CHEBI:58207"/>
    </ligand>
</feature>
<feature type="binding site" evidence="1">
    <location>
        <position position="118"/>
    </location>
    <ligand>
        <name>5-methyltetrahydropteroyltri-L-glutamate</name>
        <dbReference type="ChEBI" id="CHEBI:58207"/>
    </ligand>
</feature>
<feature type="binding site" evidence="1">
    <location>
        <begin position="437"/>
        <end position="439"/>
    </location>
    <ligand>
        <name>L-homocysteine</name>
        <dbReference type="ChEBI" id="CHEBI:58199"/>
    </ligand>
</feature>
<feature type="binding site" evidence="1">
    <location>
        <begin position="437"/>
        <end position="439"/>
    </location>
    <ligand>
        <name>L-methionine</name>
        <dbReference type="ChEBI" id="CHEBI:57844"/>
    </ligand>
</feature>
<feature type="binding site" evidence="1">
    <location>
        <position position="490"/>
    </location>
    <ligand>
        <name>L-homocysteine</name>
        <dbReference type="ChEBI" id="CHEBI:58199"/>
    </ligand>
</feature>
<feature type="binding site" evidence="1">
    <location>
        <position position="490"/>
    </location>
    <ligand>
        <name>L-methionine</name>
        <dbReference type="ChEBI" id="CHEBI:57844"/>
    </ligand>
</feature>
<feature type="binding site" evidence="1">
    <location>
        <begin position="521"/>
        <end position="522"/>
    </location>
    <ligand>
        <name>5-methyltetrahydropteroyltri-L-glutamate</name>
        <dbReference type="ChEBI" id="CHEBI:58207"/>
    </ligand>
</feature>
<feature type="binding site" evidence="1">
    <location>
        <position position="567"/>
    </location>
    <ligand>
        <name>5-methyltetrahydropteroyltri-L-glutamate</name>
        <dbReference type="ChEBI" id="CHEBI:58207"/>
    </ligand>
</feature>
<feature type="binding site" evidence="1">
    <location>
        <position position="605"/>
    </location>
    <ligand>
        <name>L-homocysteine</name>
        <dbReference type="ChEBI" id="CHEBI:58199"/>
    </ligand>
</feature>
<feature type="binding site" evidence="1">
    <location>
        <position position="605"/>
    </location>
    <ligand>
        <name>L-methionine</name>
        <dbReference type="ChEBI" id="CHEBI:57844"/>
    </ligand>
</feature>
<feature type="binding site" evidence="1">
    <location>
        <position position="611"/>
    </location>
    <ligand>
        <name>5-methyltetrahydropteroyltri-L-glutamate</name>
        <dbReference type="ChEBI" id="CHEBI:58207"/>
    </ligand>
</feature>
<feature type="binding site" evidence="1">
    <location>
        <position position="647"/>
    </location>
    <ligand>
        <name>Zn(2+)</name>
        <dbReference type="ChEBI" id="CHEBI:29105"/>
        <note>catalytic</note>
    </ligand>
</feature>
<feature type="binding site" evidence="1">
    <location>
        <position position="649"/>
    </location>
    <ligand>
        <name>Zn(2+)</name>
        <dbReference type="ChEBI" id="CHEBI:29105"/>
        <note>catalytic</note>
    </ligand>
</feature>
<feature type="binding site" evidence="1">
    <location>
        <position position="671"/>
    </location>
    <ligand>
        <name>Zn(2+)</name>
        <dbReference type="ChEBI" id="CHEBI:29105"/>
        <note>catalytic</note>
    </ligand>
</feature>
<feature type="binding site" evidence="1">
    <location>
        <position position="732"/>
    </location>
    <ligand>
        <name>Zn(2+)</name>
        <dbReference type="ChEBI" id="CHEBI:29105"/>
        <note>catalytic</note>
    </ligand>
</feature>
<dbReference type="EC" id="2.1.1.14" evidence="1"/>
<dbReference type="EMBL" id="LT708304">
    <property type="protein sequence ID" value="SIT99764.1"/>
    <property type="molecule type" value="Genomic_DNA"/>
</dbReference>
<dbReference type="RefSeq" id="NP_854820.1">
    <property type="nucleotide sequence ID" value="NC_002945.3"/>
</dbReference>
<dbReference type="RefSeq" id="WP_003405914.1">
    <property type="nucleotide sequence ID" value="NC_002945.4"/>
</dbReference>
<dbReference type="SMR" id="P65341"/>
<dbReference type="KEGG" id="mbo:BQ2027_MB1164C"/>
<dbReference type="PATRIC" id="fig|233413.5.peg.1274"/>
<dbReference type="UniPathway" id="UPA00051">
    <property type="reaction ID" value="UER00082"/>
</dbReference>
<dbReference type="Proteomes" id="UP000001419">
    <property type="component" value="Chromosome"/>
</dbReference>
<dbReference type="GO" id="GO:0003871">
    <property type="term" value="F:5-methyltetrahydropteroyltriglutamate-homocysteine S-methyltransferase activity"/>
    <property type="evidence" value="ECO:0007669"/>
    <property type="project" value="UniProtKB-UniRule"/>
</dbReference>
<dbReference type="GO" id="GO:0008270">
    <property type="term" value="F:zinc ion binding"/>
    <property type="evidence" value="ECO:0007669"/>
    <property type="project" value="InterPro"/>
</dbReference>
<dbReference type="GO" id="GO:0009086">
    <property type="term" value="P:methionine biosynthetic process"/>
    <property type="evidence" value="ECO:0007669"/>
    <property type="project" value="UniProtKB-UniRule"/>
</dbReference>
<dbReference type="GO" id="GO:0032259">
    <property type="term" value="P:methylation"/>
    <property type="evidence" value="ECO:0007669"/>
    <property type="project" value="UniProtKB-KW"/>
</dbReference>
<dbReference type="CDD" id="cd03311">
    <property type="entry name" value="CIMS_C_terminal_like"/>
    <property type="match status" value="1"/>
</dbReference>
<dbReference type="CDD" id="cd03312">
    <property type="entry name" value="CIMS_N_terminal_like"/>
    <property type="match status" value="1"/>
</dbReference>
<dbReference type="Gene3D" id="3.20.20.210">
    <property type="match status" value="2"/>
</dbReference>
<dbReference type="HAMAP" id="MF_00172">
    <property type="entry name" value="Meth_synth"/>
    <property type="match status" value="1"/>
</dbReference>
<dbReference type="InterPro" id="IPR013215">
    <property type="entry name" value="Cbl-indep_Met_Synth_N"/>
</dbReference>
<dbReference type="InterPro" id="IPR006276">
    <property type="entry name" value="Cobalamin-indep_Met_synthase"/>
</dbReference>
<dbReference type="InterPro" id="IPR002629">
    <property type="entry name" value="Met_Synth_C/arc"/>
</dbReference>
<dbReference type="InterPro" id="IPR038071">
    <property type="entry name" value="UROD/MetE-like_sf"/>
</dbReference>
<dbReference type="NCBIfam" id="TIGR01371">
    <property type="entry name" value="met_syn_B12ind"/>
    <property type="match status" value="1"/>
</dbReference>
<dbReference type="NCBIfam" id="NF003556">
    <property type="entry name" value="PRK05222.1"/>
    <property type="match status" value="1"/>
</dbReference>
<dbReference type="PANTHER" id="PTHR30519">
    <property type="entry name" value="5-METHYLTETRAHYDROPTEROYLTRIGLUTAMATE--HOMOCYSTEINE METHYLTRANSFERASE"/>
    <property type="match status" value="1"/>
</dbReference>
<dbReference type="Pfam" id="PF08267">
    <property type="entry name" value="Meth_synt_1"/>
    <property type="match status" value="1"/>
</dbReference>
<dbReference type="Pfam" id="PF01717">
    <property type="entry name" value="Meth_synt_2"/>
    <property type="match status" value="1"/>
</dbReference>
<dbReference type="PIRSF" id="PIRSF000382">
    <property type="entry name" value="MeTrfase_B12_ind"/>
    <property type="match status" value="1"/>
</dbReference>
<dbReference type="SUPFAM" id="SSF51726">
    <property type="entry name" value="UROD/MetE-like"/>
    <property type="match status" value="2"/>
</dbReference>
<gene>
    <name evidence="1" type="primary">metE</name>
    <name type="ordered locus">BQ2027_MB1164C</name>
</gene>
<protein>
    <recommendedName>
        <fullName evidence="1">5-methyltetrahydropteroyltriglutamate--homocysteine methyltransferase</fullName>
        <ecNumber evidence="1">2.1.1.14</ecNumber>
    </recommendedName>
    <alternativeName>
        <fullName evidence="1">Cobalamin-independent methionine synthase</fullName>
    </alternativeName>
    <alternativeName>
        <fullName evidence="1">Methionine synthase, vitamin-B12 independent isozyme</fullName>
    </alternativeName>
</protein>